<name>RAPA_DIPOM</name>
<feature type="chain" id="PRO_0000030205" description="Ras-related protein O-Krev">
    <location>
        <begin position="1"/>
        <end position="181"/>
    </location>
</feature>
<feature type="propeptide" id="PRO_0000030206" description="Removed in mature form" evidence="1">
    <location>
        <begin position="182"/>
        <end position="184"/>
    </location>
</feature>
<feature type="short sequence motif" description="Effector region" evidence="3">
    <location>
        <begin position="32"/>
        <end position="40"/>
    </location>
</feature>
<feature type="binding site" evidence="1">
    <location>
        <begin position="10"/>
        <end position="17"/>
    </location>
    <ligand>
        <name>GTP</name>
        <dbReference type="ChEBI" id="CHEBI:37565"/>
    </ligand>
</feature>
<feature type="binding site" evidence="1">
    <location>
        <begin position="57"/>
        <end position="61"/>
    </location>
    <ligand>
        <name>GTP</name>
        <dbReference type="ChEBI" id="CHEBI:37565"/>
    </ligand>
</feature>
<feature type="binding site" evidence="1">
    <location>
        <begin position="116"/>
        <end position="119"/>
    </location>
    <ligand>
        <name>GTP</name>
        <dbReference type="ChEBI" id="CHEBI:37565"/>
    </ligand>
</feature>
<feature type="modified residue" description="Cysteine methyl ester" evidence="1">
    <location>
        <position position="181"/>
    </location>
</feature>
<feature type="lipid moiety-binding region" description="S-geranylgeranyl cysteine" evidence="1">
    <location>
        <position position="181"/>
    </location>
</feature>
<reference key="1">
    <citation type="journal article" date="1991" name="J. Biol. Chem.">
        <title>A family of ras-like GTP-binding proteins expressed in electromotor neurons.</title>
        <authorList>
            <person name="Ngsee J.K."/>
            <person name="Elferink L.A."/>
            <person name="Scheller R.H."/>
        </authorList>
    </citation>
    <scope>NUCLEOTIDE SEQUENCE [MRNA]</scope>
    <source>
        <tissue>Electric lobe</tissue>
    </source>
</reference>
<organism>
    <name type="scientific">Diplobatis ommata</name>
    <name type="common">Ocellated electric ray</name>
    <name type="synonym">Discopyge ommata</name>
    <dbReference type="NCBI Taxonomy" id="1870830"/>
    <lineage>
        <taxon>Eukaryota</taxon>
        <taxon>Metazoa</taxon>
        <taxon>Chordata</taxon>
        <taxon>Craniata</taxon>
        <taxon>Vertebrata</taxon>
        <taxon>Chondrichthyes</taxon>
        <taxon>Elasmobranchii</taxon>
        <taxon>Batoidea</taxon>
        <taxon>Torpediniformes</taxon>
        <taxon>Narcinidae</taxon>
        <taxon>Diplobatis</taxon>
    </lineage>
</organism>
<protein>
    <recommendedName>
        <fullName>Ras-related protein O-Krev</fullName>
        <ecNumber evidence="2">3.6.5.2</ecNumber>
    </recommendedName>
</protein>
<proteinExistence type="evidence at transcript level"/>
<comment type="catalytic activity">
    <reaction evidence="2">
        <text>GTP + H2O = GDP + phosphate + H(+)</text>
        <dbReference type="Rhea" id="RHEA:19669"/>
        <dbReference type="ChEBI" id="CHEBI:15377"/>
        <dbReference type="ChEBI" id="CHEBI:15378"/>
        <dbReference type="ChEBI" id="CHEBI:37565"/>
        <dbReference type="ChEBI" id="CHEBI:43474"/>
        <dbReference type="ChEBI" id="CHEBI:58189"/>
        <dbReference type="EC" id="3.6.5.2"/>
    </reaction>
</comment>
<comment type="subcellular location">
    <subcellularLocation>
        <location evidence="3">Cell membrane</location>
        <topology evidence="3">Lipid-anchor</topology>
        <orientation evidence="3">Cytoplasmic side</orientation>
    </subcellularLocation>
</comment>
<comment type="similarity">
    <text evidence="3">Belongs to the small GTPase superfamily. Ras family.</text>
</comment>
<sequence length="184" mass="20931">MREYKLVVLGSGGVGKSALTVQFVQGIFVEKYDPTIEDSYRKQVEVDCQPCMLEILDTAGTEQFTAMRDLYMKNGQGFALVYSITAQSTFNDLQDLREQILRVKDTEDVPMILVGNKCDLEDERVVGKEQGQNLARQWNNCAFLESSAKSKINVNEIFYDLVRQINRKAPVEKCKKKKSQCTLL</sequence>
<accession>P22123</accession>
<keyword id="KW-1003">Cell membrane</keyword>
<keyword id="KW-0342">GTP-binding</keyword>
<keyword id="KW-0378">Hydrolase</keyword>
<keyword id="KW-0449">Lipoprotein</keyword>
<keyword id="KW-0472">Membrane</keyword>
<keyword id="KW-0488">Methylation</keyword>
<keyword id="KW-0547">Nucleotide-binding</keyword>
<keyword id="KW-0636">Prenylation</keyword>
<dbReference type="EC" id="3.6.5.2" evidence="2"/>
<dbReference type="EMBL" id="M38395">
    <property type="protein sequence ID" value="AAA49226.1"/>
    <property type="molecule type" value="mRNA"/>
</dbReference>
<dbReference type="PIR" id="F38625">
    <property type="entry name" value="F38625"/>
</dbReference>
<dbReference type="SMR" id="P22123"/>
<dbReference type="GO" id="GO:0005886">
    <property type="term" value="C:plasma membrane"/>
    <property type="evidence" value="ECO:0007669"/>
    <property type="project" value="UniProtKB-SubCell"/>
</dbReference>
<dbReference type="GO" id="GO:0003925">
    <property type="term" value="F:G protein activity"/>
    <property type="evidence" value="ECO:0007669"/>
    <property type="project" value="UniProtKB-EC"/>
</dbReference>
<dbReference type="GO" id="GO:0005525">
    <property type="term" value="F:GTP binding"/>
    <property type="evidence" value="ECO:0007669"/>
    <property type="project" value="UniProtKB-KW"/>
</dbReference>
<dbReference type="GO" id="GO:0032486">
    <property type="term" value="P:Rap protein signal transduction"/>
    <property type="evidence" value="ECO:0007669"/>
    <property type="project" value="InterPro"/>
</dbReference>
<dbReference type="CDD" id="cd04175">
    <property type="entry name" value="Rap1"/>
    <property type="match status" value="1"/>
</dbReference>
<dbReference type="FunFam" id="3.40.50.300:FF:000182">
    <property type="entry name" value="ras-related protein Rap-1b"/>
    <property type="match status" value="1"/>
</dbReference>
<dbReference type="Gene3D" id="3.40.50.300">
    <property type="entry name" value="P-loop containing nucleotide triphosphate hydrolases"/>
    <property type="match status" value="1"/>
</dbReference>
<dbReference type="InterPro" id="IPR027417">
    <property type="entry name" value="P-loop_NTPase"/>
</dbReference>
<dbReference type="InterPro" id="IPR038851">
    <property type="entry name" value="Rap1"/>
</dbReference>
<dbReference type="InterPro" id="IPR005225">
    <property type="entry name" value="Small_GTP-bd"/>
</dbReference>
<dbReference type="InterPro" id="IPR001806">
    <property type="entry name" value="Small_GTPase"/>
</dbReference>
<dbReference type="InterPro" id="IPR020849">
    <property type="entry name" value="Small_GTPase_Ras-type"/>
</dbReference>
<dbReference type="NCBIfam" id="TIGR00231">
    <property type="entry name" value="small_GTP"/>
    <property type="match status" value="1"/>
</dbReference>
<dbReference type="PANTHER" id="PTHR24070">
    <property type="entry name" value="RAS, DI-RAS, AND RHEB FAMILY MEMBERS OF SMALL GTPASE SUPERFAMILY"/>
    <property type="match status" value="1"/>
</dbReference>
<dbReference type="Pfam" id="PF00071">
    <property type="entry name" value="Ras"/>
    <property type="match status" value="1"/>
</dbReference>
<dbReference type="PRINTS" id="PR00449">
    <property type="entry name" value="RASTRNSFRMNG"/>
</dbReference>
<dbReference type="SMART" id="SM00175">
    <property type="entry name" value="RAB"/>
    <property type="match status" value="1"/>
</dbReference>
<dbReference type="SMART" id="SM00176">
    <property type="entry name" value="RAN"/>
    <property type="match status" value="1"/>
</dbReference>
<dbReference type="SMART" id="SM00173">
    <property type="entry name" value="RAS"/>
    <property type="match status" value="1"/>
</dbReference>
<dbReference type="SMART" id="SM00174">
    <property type="entry name" value="RHO"/>
    <property type="match status" value="1"/>
</dbReference>
<dbReference type="SUPFAM" id="SSF52540">
    <property type="entry name" value="P-loop containing nucleoside triphosphate hydrolases"/>
    <property type="match status" value="1"/>
</dbReference>
<dbReference type="PROSITE" id="PS51421">
    <property type="entry name" value="RAS"/>
    <property type="match status" value="1"/>
</dbReference>
<evidence type="ECO:0000250" key="1"/>
<evidence type="ECO:0000250" key="2">
    <source>
        <dbReference type="UniProtKB" id="P10114"/>
    </source>
</evidence>
<evidence type="ECO:0000305" key="3"/>